<organism>
    <name type="scientific">Methanothermobacter thermautotrophicus (strain ATCC 29096 / DSM 1053 / JCM 10044 / NBRC 100330 / Delta H)</name>
    <name type="common">Methanobacterium thermoautotrophicum</name>
    <dbReference type="NCBI Taxonomy" id="187420"/>
    <lineage>
        <taxon>Archaea</taxon>
        <taxon>Methanobacteriati</taxon>
        <taxon>Methanobacteriota</taxon>
        <taxon>Methanomada group</taxon>
        <taxon>Methanobacteria</taxon>
        <taxon>Methanobacteriales</taxon>
        <taxon>Methanobacteriaceae</taxon>
        <taxon>Methanothermobacter</taxon>
    </lineage>
</organism>
<sequence length="282" mass="31655">MLLMIINGEGHILGRLASVVSKKLLEGEEVIVLNAEKILITGSKEWAYGKYKQRIDRASISNPRRMGPKYPRRPDDIFRRTVRGMLPYKKSKGREAFKGLKAYVGIPREFKDEEMVEIPDAKAGSIKKGMELGEISELLGARLQIGSVIMKKVIHTSGKRKTAIARGTIREGKGRVRINKVPVELYTPELARLKIMEPLKLAGDVINDVDINVRVVGGGIVGQAEAARMVIARGLVDWTSDMDLKEKFVQYDRTMLVGDPRRSEPKKYGGRGARARRQKSYR</sequence>
<comment type="function">
    <text evidence="1">L13 protein is one of the early assembly proteins of the 50S ribosomal subunit, although it is not seen to bind rRNA by itself. It is important during the early stages of 50S assembly (By similarity).</text>
</comment>
<comment type="subunit">
    <text evidence="1">L13 is part of the 50S ribosomal subunit. S9 is part of the 30S ribosomal subunit (By similarity).</text>
</comment>
<comment type="similarity">
    <text evidence="3">In the N-terminal section; belongs to the universal ribosomal protein uL13 family.</text>
</comment>
<comment type="similarity">
    <text evidence="3">In the C-terminal section; belongs to the universal ribosomal protein uS9 family.</text>
</comment>
<comment type="caution">
    <text evidence="3">Given that these two proteins are not members of the same ribosomal subunit, and that they are not known to contact each other in the ribosome, this is probably incorrectly predicted and should be two separate genes.</text>
</comment>
<feature type="chain" id="PRO_0000133761" description="Fused uL13/uS9 ribosomal subunit protein">
    <location>
        <begin position="1"/>
        <end position="282"/>
    </location>
</feature>
<feature type="region of interest" description="Large ribosomal subunit protein uL13">
    <location>
        <begin position="1"/>
        <end position="141"/>
    </location>
</feature>
<feature type="region of interest" description="Small ribosomal subunit protein uS9">
    <location>
        <begin position="150"/>
        <end position="282"/>
    </location>
</feature>
<feature type="region of interest" description="Disordered" evidence="2">
    <location>
        <begin position="259"/>
        <end position="282"/>
    </location>
</feature>
<feature type="compositionally biased region" description="Basic residues" evidence="2">
    <location>
        <begin position="273"/>
        <end position="282"/>
    </location>
</feature>
<gene>
    <name type="primary">rpl13/rps9</name>
    <name type="ordered locus">MTH_39</name>
</gene>
<accession>O26146</accession>
<keyword id="KW-1185">Reference proteome</keyword>
<keyword id="KW-0687">Ribonucleoprotein</keyword>
<keyword id="KW-0689">Ribosomal protein</keyword>
<evidence type="ECO:0000250" key="1"/>
<evidence type="ECO:0000256" key="2">
    <source>
        <dbReference type="SAM" id="MobiDB-lite"/>
    </source>
</evidence>
<evidence type="ECO:0000305" key="3"/>
<protein>
    <recommendedName>
        <fullName>Fused uL13/uS9 ribosomal subunit protein</fullName>
    </recommendedName>
    <domain>
        <recommendedName>
            <fullName>Large ribosomal subunit protein uL13</fullName>
        </recommendedName>
    </domain>
    <domain>
        <recommendedName>
            <fullName>Small ribosomal subunit protein uS9</fullName>
        </recommendedName>
    </domain>
</protein>
<name>RLSX_METTH</name>
<dbReference type="EMBL" id="AE000666">
    <property type="protein sequence ID" value="AAB84547.1"/>
    <property type="molecule type" value="Genomic_DNA"/>
</dbReference>
<dbReference type="PIR" id="E69150">
    <property type="entry name" value="E69150"/>
</dbReference>
<dbReference type="SMR" id="O26146"/>
<dbReference type="STRING" id="187420.MTH_39"/>
<dbReference type="PaxDb" id="187420-MTH_39"/>
<dbReference type="EnsemblBacteria" id="AAB84547">
    <property type="protein sequence ID" value="AAB84547"/>
    <property type="gene ID" value="MTH_39"/>
</dbReference>
<dbReference type="KEGG" id="mth:MTH_39"/>
<dbReference type="PATRIC" id="fig|187420.15.peg.38"/>
<dbReference type="HOGENOM" id="CLU_985587_0_0_2"/>
<dbReference type="InParanoid" id="O26146"/>
<dbReference type="Proteomes" id="UP000005223">
    <property type="component" value="Chromosome"/>
</dbReference>
<dbReference type="GO" id="GO:0022627">
    <property type="term" value="C:cytosolic small ribosomal subunit"/>
    <property type="evidence" value="ECO:0007669"/>
    <property type="project" value="TreeGrafter"/>
</dbReference>
<dbReference type="GO" id="GO:0015934">
    <property type="term" value="C:large ribosomal subunit"/>
    <property type="evidence" value="ECO:0007669"/>
    <property type="project" value="InterPro"/>
</dbReference>
<dbReference type="GO" id="GO:0003723">
    <property type="term" value="F:RNA binding"/>
    <property type="evidence" value="ECO:0007669"/>
    <property type="project" value="TreeGrafter"/>
</dbReference>
<dbReference type="GO" id="GO:0003735">
    <property type="term" value="F:structural constituent of ribosome"/>
    <property type="evidence" value="ECO:0007669"/>
    <property type="project" value="InterPro"/>
</dbReference>
<dbReference type="GO" id="GO:0000462">
    <property type="term" value="P:maturation of SSU-rRNA from tricistronic rRNA transcript (SSU-rRNA, 5.8S rRNA, LSU-rRNA)"/>
    <property type="evidence" value="ECO:0007669"/>
    <property type="project" value="TreeGrafter"/>
</dbReference>
<dbReference type="GO" id="GO:0006412">
    <property type="term" value="P:translation"/>
    <property type="evidence" value="ECO:0007669"/>
    <property type="project" value="UniProtKB-UniRule"/>
</dbReference>
<dbReference type="CDD" id="cd00392">
    <property type="entry name" value="Ribosomal_L13"/>
    <property type="match status" value="1"/>
</dbReference>
<dbReference type="FunFam" id="3.30.230.10:FF:000051">
    <property type="entry name" value="30S ribosomal protein S9"/>
    <property type="match status" value="1"/>
</dbReference>
<dbReference type="Gene3D" id="3.30.230.10">
    <property type="match status" value="1"/>
</dbReference>
<dbReference type="Gene3D" id="3.90.1180.10">
    <property type="entry name" value="Ribosomal protein L13"/>
    <property type="match status" value="1"/>
</dbReference>
<dbReference type="HAMAP" id="MF_01366">
    <property type="entry name" value="Ribosomal_uL13"/>
    <property type="match status" value="1"/>
</dbReference>
<dbReference type="HAMAP" id="MF_00532_A">
    <property type="entry name" value="Ribosomal_uS9_A"/>
    <property type="match status" value="1"/>
</dbReference>
<dbReference type="InterPro" id="IPR020568">
    <property type="entry name" value="Ribosomal_Su5_D2-typ_SF"/>
</dbReference>
<dbReference type="InterPro" id="IPR005822">
    <property type="entry name" value="Ribosomal_uL13"/>
</dbReference>
<dbReference type="InterPro" id="IPR023563">
    <property type="entry name" value="Ribosomal_uL13_CS"/>
</dbReference>
<dbReference type="InterPro" id="IPR005755">
    <property type="entry name" value="Ribosomal_uL13_euk/arc"/>
</dbReference>
<dbReference type="InterPro" id="IPR036899">
    <property type="entry name" value="Ribosomal_uL13_sf"/>
</dbReference>
<dbReference type="InterPro" id="IPR000754">
    <property type="entry name" value="Ribosomal_uS9"/>
</dbReference>
<dbReference type="InterPro" id="IPR019958">
    <property type="entry name" value="Ribosomal_uS9_archaeal"/>
</dbReference>
<dbReference type="InterPro" id="IPR014721">
    <property type="entry name" value="Ribsml_uS5_D2-typ_fold_subgr"/>
</dbReference>
<dbReference type="NCBIfam" id="TIGR01077">
    <property type="entry name" value="L13_A_E"/>
    <property type="match status" value="1"/>
</dbReference>
<dbReference type="NCBIfam" id="NF001749">
    <property type="entry name" value="PRK00474.1"/>
    <property type="match status" value="1"/>
</dbReference>
<dbReference type="NCBIfam" id="NF005004">
    <property type="entry name" value="PRK06394.1"/>
    <property type="match status" value="1"/>
</dbReference>
<dbReference type="NCBIfam" id="TIGR03627">
    <property type="entry name" value="uS9_arch"/>
    <property type="match status" value="1"/>
</dbReference>
<dbReference type="PANTHER" id="PTHR21569:SF16">
    <property type="entry name" value="RIBOSOMAL PROTEIN S16"/>
    <property type="match status" value="1"/>
</dbReference>
<dbReference type="PANTHER" id="PTHR21569">
    <property type="entry name" value="RIBOSOMAL PROTEIN S9"/>
    <property type="match status" value="1"/>
</dbReference>
<dbReference type="Pfam" id="PF00572">
    <property type="entry name" value="Ribosomal_L13"/>
    <property type="match status" value="1"/>
</dbReference>
<dbReference type="Pfam" id="PF00380">
    <property type="entry name" value="Ribosomal_S9"/>
    <property type="match status" value="1"/>
</dbReference>
<dbReference type="SUPFAM" id="SSF52161">
    <property type="entry name" value="Ribosomal protein L13"/>
    <property type="match status" value="1"/>
</dbReference>
<dbReference type="SUPFAM" id="SSF54211">
    <property type="entry name" value="Ribosomal protein S5 domain 2-like"/>
    <property type="match status" value="1"/>
</dbReference>
<dbReference type="PROSITE" id="PS00783">
    <property type="entry name" value="RIBOSOMAL_L13"/>
    <property type="match status" value="1"/>
</dbReference>
<reference key="1">
    <citation type="journal article" date="1997" name="J. Bacteriol.">
        <title>Complete genome sequence of Methanobacterium thermoautotrophicum deltaH: functional analysis and comparative genomics.</title>
        <authorList>
            <person name="Smith D.R."/>
            <person name="Doucette-Stamm L.A."/>
            <person name="Deloughery C."/>
            <person name="Lee H.-M."/>
            <person name="Dubois J."/>
            <person name="Aldredge T."/>
            <person name="Bashirzadeh R."/>
            <person name="Blakely D."/>
            <person name="Cook R."/>
            <person name="Gilbert K."/>
            <person name="Harrison D."/>
            <person name="Hoang L."/>
            <person name="Keagle P."/>
            <person name="Lumm W."/>
            <person name="Pothier B."/>
            <person name="Qiu D."/>
            <person name="Spadafora R."/>
            <person name="Vicare R."/>
            <person name="Wang Y."/>
            <person name="Wierzbowski J."/>
            <person name="Gibson R."/>
            <person name="Jiwani N."/>
            <person name="Caruso A."/>
            <person name="Bush D."/>
            <person name="Safer H."/>
            <person name="Patwell D."/>
            <person name="Prabhakar S."/>
            <person name="McDougall S."/>
            <person name="Shimer G."/>
            <person name="Goyal A."/>
            <person name="Pietrovski S."/>
            <person name="Church G.M."/>
            <person name="Daniels C.J."/>
            <person name="Mao J.-I."/>
            <person name="Rice P."/>
            <person name="Noelling J."/>
            <person name="Reeve J.N."/>
        </authorList>
    </citation>
    <scope>NUCLEOTIDE SEQUENCE [LARGE SCALE GENOMIC DNA]</scope>
    <source>
        <strain>ATCC 29096 / DSM 1053 / JCM 10044 / NBRC 100330 / Delta H</strain>
    </source>
</reference>
<proteinExistence type="inferred from homology"/>